<evidence type="ECO:0000255" key="1">
    <source>
        <dbReference type="HAMAP-Rule" id="MF_00377"/>
    </source>
</evidence>
<name>DNAA_PROS9</name>
<protein>
    <recommendedName>
        <fullName evidence="1">Chromosomal replication initiator protein DnaA</fullName>
    </recommendedName>
</protein>
<organism>
    <name type="scientific">Prochlorococcus marinus subsp. pastoris (strain PCC 9511)</name>
    <dbReference type="NCBI Taxonomy" id="100363"/>
    <lineage>
        <taxon>Bacteria</taxon>
        <taxon>Bacillati</taxon>
        <taxon>Cyanobacteriota</taxon>
        <taxon>Cyanophyceae</taxon>
        <taxon>Synechococcales</taxon>
        <taxon>Prochlorococcaceae</taxon>
        <taxon>Prochlorococcus</taxon>
    </lineage>
</organism>
<reference key="1">
    <citation type="submission" date="1999-06" db="EMBL/GenBank/DDBJ databases">
        <title>The dnaA gene of Prochlorococcus PCC9511.</title>
        <authorList>
            <person name="Hess W.R."/>
            <person name="Hilbig M."/>
            <person name="Holtzendorff J."/>
        </authorList>
    </citation>
    <scope>NUCLEOTIDE SEQUENCE [GENOMIC DNA]</scope>
</reference>
<feature type="chain" id="PRO_0000114237" description="Chromosomal replication initiator protein DnaA">
    <location>
        <begin position="1"/>
        <end position="463"/>
    </location>
</feature>
<feature type="region of interest" description="Domain I, interacts with DnaA modulators" evidence="1">
    <location>
        <begin position="1"/>
        <end position="84"/>
    </location>
</feature>
<feature type="region of interest" description="Domain II" evidence="1">
    <location>
        <begin position="84"/>
        <end position="122"/>
    </location>
</feature>
<feature type="region of interest" description="Domain III, AAA+ region" evidence="1">
    <location>
        <begin position="123"/>
        <end position="339"/>
    </location>
</feature>
<feature type="region of interest" description="Domain IV, binds dsDNA" evidence="1">
    <location>
        <begin position="340"/>
        <end position="463"/>
    </location>
</feature>
<feature type="binding site" evidence="1">
    <location>
        <position position="167"/>
    </location>
    <ligand>
        <name>ATP</name>
        <dbReference type="ChEBI" id="CHEBI:30616"/>
    </ligand>
</feature>
<feature type="binding site" evidence="1">
    <location>
        <position position="169"/>
    </location>
    <ligand>
        <name>ATP</name>
        <dbReference type="ChEBI" id="CHEBI:30616"/>
    </ligand>
</feature>
<feature type="binding site" evidence="1">
    <location>
        <position position="170"/>
    </location>
    <ligand>
        <name>ATP</name>
        <dbReference type="ChEBI" id="CHEBI:30616"/>
    </ligand>
</feature>
<feature type="binding site" evidence="1">
    <location>
        <position position="171"/>
    </location>
    <ligand>
        <name>ATP</name>
        <dbReference type="ChEBI" id="CHEBI:30616"/>
    </ligand>
</feature>
<comment type="function">
    <text evidence="1">Plays an essential role in the initiation and regulation of chromosomal replication. ATP-DnaA binds to the origin of replication (oriC) to initiate formation of the DNA replication initiation complex once per cell cycle. Binds the DnaA box (a 9 base pair repeat at the origin) and separates the double-stranded (ds)DNA. Forms a right-handed helical filament on oriC DNA; dsDNA binds to the exterior of the filament while single-stranded (ss)DNA is stabiized in the filament's interior. The ATP-DnaA-oriC complex binds and stabilizes one strand of the AT-rich DNA unwinding element (DUE), permitting loading of DNA polymerase. After initiation quickly degrades to an ADP-DnaA complex that is not apt for DNA replication. Binds acidic phospholipids.</text>
</comment>
<comment type="subunit">
    <text evidence="1">Oligomerizes as a right-handed, spiral filament on DNA at oriC.</text>
</comment>
<comment type="subcellular location">
    <subcellularLocation>
        <location evidence="1">Cytoplasm</location>
    </subcellularLocation>
</comment>
<comment type="domain">
    <text evidence="1">Domain I is involved in oligomerization and binding regulators, domain II is flexibile and of varying length in different bacteria, domain III forms the AAA+ region, while domain IV binds dsDNA.</text>
</comment>
<comment type="similarity">
    <text evidence="1">Belongs to the DnaA family.</text>
</comment>
<proteinExistence type="inferred from homology"/>
<accession>P0A3A3</accession>
<accession>Q9S487</accession>
<keyword id="KW-0067">ATP-binding</keyword>
<keyword id="KW-0963">Cytoplasm</keyword>
<keyword id="KW-0235">DNA replication</keyword>
<keyword id="KW-0238">DNA-binding</keyword>
<keyword id="KW-0446">Lipid-binding</keyword>
<keyword id="KW-0547">Nucleotide-binding</keyword>
<gene>
    <name evidence="1" type="primary">dnaA</name>
</gene>
<dbReference type="EMBL" id="AF158628">
    <property type="protein sequence ID" value="AAD45692.1"/>
    <property type="molecule type" value="Genomic_DNA"/>
</dbReference>
<dbReference type="SMR" id="P0A3A3"/>
<dbReference type="GO" id="GO:0005737">
    <property type="term" value="C:cytoplasm"/>
    <property type="evidence" value="ECO:0007669"/>
    <property type="project" value="UniProtKB-SubCell"/>
</dbReference>
<dbReference type="GO" id="GO:0005886">
    <property type="term" value="C:plasma membrane"/>
    <property type="evidence" value="ECO:0007669"/>
    <property type="project" value="TreeGrafter"/>
</dbReference>
<dbReference type="GO" id="GO:0005524">
    <property type="term" value="F:ATP binding"/>
    <property type="evidence" value="ECO:0007669"/>
    <property type="project" value="UniProtKB-UniRule"/>
</dbReference>
<dbReference type="GO" id="GO:0016887">
    <property type="term" value="F:ATP hydrolysis activity"/>
    <property type="evidence" value="ECO:0007669"/>
    <property type="project" value="InterPro"/>
</dbReference>
<dbReference type="GO" id="GO:0003688">
    <property type="term" value="F:DNA replication origin binding"/>
    <property type="evidence" value="ECO:0007669"/>
    <property type="project" value="UniProtKB-UniRule"/>
</dbReference>
<dbReference type="GO" id="GO:0008289">
    <property type="term" value="F:lipid binding"/>
    <property type="evidence" value="ECO:0007669"/>
    <property type="project" value="UniProtKB-KW"/>
</dbReference>
<dbReference type="GO" id="GO:0006270">
    <property type="term" value="P:DNA replication initiation"/>
    <property type="evidence" value="ECO:0007669"/>
    <property type="project" value="UniProtKB-UniRule"/>
</dbReference>
<dbReference type="GO" id="GO:0006275">
    <property type="term" value="P:regulation of DNA replication"/>
    <property type="evidence" value="ECO:0007669"/>
    <property type="project" value="UniProtKB-UniRule"/>
</dbReference>
<dbReference type="CDD" id="cd00009">
    <property type="entry name" value="AAA"/>
    <property type="match status" value="1"/>
</dbReference>
<dbReference type="CDD" id="cd06571">
    <property type="entry name" value="Bac_DnaA_C"/>
    <property type="match status" value="1"/>
</dbReference>
<dbReference type="FunFam" id="3.40.50.300:FF:000668">
    <property type="entry name" value="Chromosomal replication initiator protein DnaA"/>
    <property type="match status" value="1"/>
</dbReference>
<dbReference type="Gene3D" id="1.10.1750.10">
    <property type="match status" value="1"/>
</dbReference>
<dbReference type="Gene3D" id="1.10.8.60">
    <property type="match status" value="1"/>
</dbReference>
<dbReference type="Gene3D" id="3.30.300.180">
    <property type="match status" value="1"/>
</dbReference>
<dbReference type="Gene3D" id="3.40.50.300">
    <property type="entry name" value="P-loop containing nucleotide triphosphate hydrolases"/>
    <property type="match status" value="1"/>
</dbReference>
<dbReference type="HAMAP" id="MF_00377">
    <property type="entry name" value="DnaA_bact"/>
    <property type="match status" value="1"/>
</dbReference>
<dbReference type="InterPro" id="IPR003593">
    <property type="entry name" value="AAA+_ATPase"/>
</dbReference>
<dbReference type="InterPro" id="IPR001957">
    <property type="entry name" value="Chromosome_initiator_DnaA"/>
</dbReference>
<dbReference type="InterPro" id="IPR020591">
    <property type="entry name" value="Chromosome_initiator_DnaA-like"/>
</dbReference>
<dbReference type="InterPro" id="IPR018312">
    <property type="entry name" value="Chromosome_initiator_DnaA_CS"/>
</dbReference>
<dbReference type="InterPro" id="IPR013159">
    <property type="entry name" value="DnaA_C"/>
</dbReference>
<dbReference type="InterPro" id="IPR013317">
    <property type="entry name" value="DnaA_dom"/>
</dbReference>
<dbReference type="InterPro" id="IPR024633">
    <property type="entry name" value="DnaA_N_dom"/>
</dbReference>
<dbReference type="InterPro" id="IPR038454">
    <property type="entry name" value="DnaA_N_sf"/>
</dbReference>
<dbReference type="InterPro" id="IPR027417">
    <property type="entry name" value="P-loop_NTPase"/>
</dbReference>
<dbReference type="InterPro" id="IPR010921">
    <property type="entry name" value="Trp_repressor/repl_initiator"/>
</dbReference>
<dbReference type="NCBIfam" id="TIGR00362">
    <property type="entry name" value="DnaA"/>
    <property type="match status" value="1"/>
</dbReference>
<dbReference type="PANTHER" id="PTHR30050">
    <property type="entry name" value="CHROMOSOMAL REPLICATION INITIATOR PROTEIN DNAA"/>
    <property type="match status" value="1"/>
</dbReference>
<dbReference type="PANTHER" id="PTHR30050:SF2">
    <property type="entry name" value="CHROMOSOMAL REPLICATION INITIATOR PROTEIN DNAA"/>
    <property type="match status" value="1"/>
</dbReference>
<dbReference type="Pfam" id="PF00308">
    <property type="entry name" value="Bac_DnaA"/>
    <property type="match status" value="1"/>
</dbReference>
<dbReference type="Pfam" id="PF08299">
    <property type="entry name" value="Bac_DnaA_C"/>
    <property type="match status" value="1"/>
</dbReference>
<dbReference type="Pfam" id="PF11638">
    <property type="entry name" value="DnaA_N"/>
    <property type="match status" value="1"/>
</dbReference>
<dbReference type="PRINTS" id="PR00051">
    <property type="entry name" value="DNAA"/>
</dbReference>
<dbReference type="SMART" id="SM00382">
    <property type="entry name" value="AAA"/>
    <property type="match status" value="1"/>
</dbReference>
<dbReference type="SMART" id="SM00760">
    <property type="entry name" value="Bac_DnaA_C"/>
    <property type="match status" value="1"/>
</dbReference>
<dbReference type="SUPFAM" id="SSF52540">
    <property type="entry name" value="P-loop containing nucleoside triphosphate hydrolases"/>
    <property type="match status" value="1"/>
</dbReference>
<dbReference type="SUPFAM" id="SSF48295">
    <property type="entry name" value="TrpR-like"/>
    <property type="match status" value="1"/>
</dbReference>
<dbReference type="PROSITE" id="PS01008">
    <property type="entry name" value="DNAA"/>
    <property type="match status" value="1"/>
</dbReference>
<sequence>MQAANPIWAEVQQLLQKNLSKPSFETWIRPAKFNCFENGLLTLITPNNFTSDWLRKNYSETIEKAAEEICGHNVKVVFKSETNINNNSNSSDSVSQQNINSQSKSFSINQSNNLINRSKKSHSLNTRYVFKRFVVGPNSRMAHAAALAVAESPGREFNPLFICGGVGLGKTHLMQAVGHYRVEIDPDAKVLYVSTETFSSDLIQSIRKDGMHAFKNKYRSVDLLLIDDIQFLEGKEYTQEEFFNTFNALYEAGKQIVIASDRPPSQIPKLQERLISRFSMGLIADIQPPDIETRMAILQKKAEQERMNLPRDLIQFIAGRFSSNIRELEGAFTRAVAFASITGLPMTVQSIAPMLDPNSVGVVVTPKQVIKKVSDFFEVSAEELVSSSRRKPVSQARQIGMYLMRQGTDLSLPKIGDEFGGKDHTTVMYAIEQVEKKLSSDPNVASQVQKIKDLLQIDSRKNL</sequence>